<protein>
    <recommendedName>
        <fullName evidence="1">Isoprenyl transferase</fullName>
        <ecNumber evidence="1">2.5.1.-</ecNumber>
    </recommendedName>
</protein>
<keyword id="KW-0460">Magnesium</keyword>
<keyword id="KW-0479">Metal-binding</keyword>
<keyword id="KW-0808">Transferase</keyword>
<name>ISPT_STRP6</name>
<proteinExistence type="inferred from homology"/>
<accession>Q5X9U4</accession>
<comment type="function">
    <text evidence="1">Catalyzes the condensation of isopentenyl diphosphate (IPP) with allylic pyrophosphates generating different type of terpenoids.</text>
</comment>
<comment type="cofactor">
    <cofactor evidence="1">
        <name>Mg(2+)</name>
        <dbReference type="ChEBI" id="CHEBI:18420"/>
    </cofactor>
    <text evidence="1">Binds 2 magnesium ions per subunit.</text>
</comment>
<comment type="subunit">
    <text evidence="1">Homodimer.</text>
</comment>
<comment type="similarity">
    <text evidence="1">Belongs to the UPP synthase family.</text>
</comment>
<evidence type="ECO:0000255" key="1">
    <source>
        <dbReference type="HAMAP-Rule" id="MF_01139"/>
    </source>
</evidence>
<dbReference type="EC" id="2.5.1.-" evidence="1"/>
<dbReference type="EMBL" id="CP000003">
    <property type="protein sequence ID" value="AAT87819.1"/>
    <property type="molecule type" value="Genomic_DNA"/>
</dbReference>
<dbReference type="RefSeq" id="WP_002982598.1">
    <property type="nucleotide sequence ID" value="NC_006086.1"/>
</dbReference>
<dbReference type="SMR" id="Q5X9U4"/>
<dbReference type="KEGG" id="spa:M6_Spy1684"/>
<dbReference type="HOGENOM" id="CLU_038505_1_1_9"/>
<dbReference type="Proteomes" id="UP000001167">
    <property type="component" value="Chromosome"/>
</dbReference>
<dbReference type="GO" id="GO:0005829">
    <property type="term" value="C:cytosol"/>
    <property type="evidence" value="ECO:0007669"/>
    <property type="project" value="TreeGrafter"/>
</dbReference>
<dbReference type="GO" id="GO:0008834">
    <property type="term" value="F:ditrans,polycis-undecaprenyl-diphosphate synthase [(2E,6E)-farnesyl-diphosphate specific] activity"/>
    <property type="evidence" value="ECO:0007669"/>
    <property type="project" value="TreeGrafter"/>
</dbReference>
<dbReference type="GO" id="GO:0000287">
    <property type="term" value="F:magnesium ion binding"/>
    <property type="evidence" value="ECO:0007669"/>
    <property type="project" value="UniProtKB-UniRule"/>
</dbReference>
<dbReference type="GO" id="GO:0030145">
    <property type="term" value="F:manganese ion binding"/>
    <property type="evidence" value="ECO:0007669"/>
    <property type="project" value="TreeGrafter"/>
</dbReference>
<dbReference type="GO" id="GO:0016094">
    <property type="term" value="P:polyprenol biosynthetic process"/>
    <property type="evidence" value="ECO:0007669"/>
    <property type="project" value="TreeGrafter"/>
</dbReference>
<dbReference type="CDD" id="cd00475">
    <property type="entry name" value="Cis_IPPS"/>
    <property type="match status" value="1"/>
</dbReference>
<dbReference type="FunFam" id="3.40.1180.10:FF:000001">
    <property type="entry name" value="(2E,6E)-farnesyl-diphosphate-specific ditrans,polycis-undecaprenyl-diphosphate synthase"/>
    <property type="match status" value="1"/>
</dbReference>
<dbReference type="Gene3D" id="3.40.1180.10">
    <property type="entry name" value="Decaprenyl diphosphate synthase-like"/>
    <property type="match status" value="1"/>
</dbReference>
<dbReference type="HAMAP" id="MF_01139">
    <property type="entry name" value="ISPT"/>
    <property type="match status" value="1"/>
</dbReference>
<dbReference type="InterPro" id="IPR001441">
    <property type="entry name" value="UPP_synth-like"/>
</dbReference>
<dbReference type="InterPro" id="IPR018520">
    <property type="entry name" value="UPP_synth-like_CS"/>
</dbReference>
<dbReference type="InterPro" id="IPR036424">
    <property type="entry name" value="UPP_synth-like_sf"/>
</dbReference>
<dbReference type="NCBIfam" id="NF011405">
    <property type="entry name" value="PRK14830.1"/>
    <property type="match status" value="1"/>
</dbReference>
<dbReference type="NCBIfam" id="TIGR00055">
    <property type="entry name" value="uppS"/>
    <property type="match status" value="1"/>
</dbReference>
<dbReference type="PANTHER" id="PTHR10291:SF0">
    <property type="entry name" value="DEHYDRODOLICHYL DIPHOSPHATE SYNTHASE 2"/>
    <property type="match status" value="1"/>
</dbReference>
<dbReference type="PANTHER" id="PTHR10291">
    <property type="entry name" value="DEHYDRODOLICHYL DIPHOSPHATE SYNTHASE FAMILY MEMBER"/>
    <property type="match status" value="1"/>
</dbReference>
<dbReference type="Pfam" id="PF01255">
    <property type="entry name" value="Prenyltransf"/>
    <property type="match status" value="1"/>
</dbReference>
<dbReference type="SUPFAM" id="SSF64005">
    <property type="entry name" value="Undecaprenyl diphosphate synthase"/>
    <property type="match status" value="1"/>
</dbReference>
<dbReference type="PROSITE" id="PS01066">
    <property type="entry name" value="UPP_SYNTHASE"/>
    <property type="match status" value="1"/>
</dbReference>
<feature type="chain" id="PRO_0000123694" description="Isoprenyl transferase">
    <location>
        <begin position="1"/>
        <end position="249"/>
    </location>
</feature>
<feature type="active site" evidence="1">
    <location>
        <position position="25"/>
    </location>
</feature>
<feature type="active site" description="Proton acceptor" evidence="1">
    <location>
        <position position="73"/>
    </location>
</feature>
<feature type="binding site" evidence="1">
    <location>
        <position position="25"/>
    </location>
    <ligand>
        <name>Mg(2+)</name>
        <dbReference type="ChEBI" id="CHEBI:18420"/>
    </ligand>
</feature>
<feature type="binding site" evidence="1">
    <location>
        <begin position="26"/>
        <end position="29"/>
    </location>
    <ligand>
        <name>substrate</name>
    </ligand>
</feature>
<feature type="binding site" evidence="1">
    <location>
        <position position="30"/>
    </location>
    <ligand>
        <name>substrate</name>
    </ligand>
</feature>
<feature type="binding site" evidence="1">
    <location>
        <position position="38"/>
    </location>
    <ligand>
        <name>substrate</name>
    </ligand>
</feature>
<feature type="binding site" evidence="1">
    <location>
        <position position="42"/>
    </location>
    <ligand>
        <name>substrate</name>
    </ligand>
</feature>
<feature type="binding site" evidence="1">
    <location>
        <begin position="70"/>
        <end position="72"/>
    </location>
    <ligand>
        <name>substrate</name>
    </ligand>
</feature>
<feature type="binding site" evidence="1">
    <location>
        <position position="74"/>
    </location>
    <ligand>
        <name>substrate</name>
    </ligand>
</feature>
<feature type="binding site" evidence="1">
    <location>
        <position position="76"/>
    </location>
    <ligand>
        <name>substrate</name>
    </ligand>
</feature>
<feature type="binding site" evidence="1">
    <location>
        <position position="197"/>
    </location>
    <ligand>
        <name>substrate</name>
    </ligand>
</feature>
<feature type="binding site" evidence="1">
    <location>
        <begin position="203"/>
        <end position="205"/>
    </location>
    <ligand>
        <name>substrate</name>
    </ligand>
</feature>
<feature type="binding site" evidence="1">
    <location>
        <position position="216"/>
    </location>
    <ligand>
        <name>Mg(2+)</name>
        <dbReference type="ChEBI" id="CHEBI:18420"/>
    </ligand>
</feature>
<gene>
    <name evidence="1" type="primary">uppS</name>
    <name type="ordered locus">M6_Spy1684</name>
</gene>
<organism>
    <name type="scientific">Streptococcus pyogenes serotype M6 (strain ATCC BAA-946 / MGAS10394)</name>
    <dbReference type="NCBI Taxonomy" id="286636"/>
    <lineage>
        <taxon>Bacteria</taxon>
        <taxon>Bacillati</taxon>
        <taxon>Bacillota</taxon>
        <taxon>Bacilli</taxon>
        <taxon>Lactobacillales</taxon>
        <taxon>Streptococcaceae</taxon>
        <taxon>Streptococcus</taxon>
    </lineage>
</organism>
<sequence length="249" mass="28227">MFGLKAKSTKKVLGSIPKHIGIIMDGNGRWAKKRLKPRVFGHKAGMDALQEVTITASELGVKVLTVYAFSTENWSRPQDEVSFIMNLPVAFFDKYVPVLHENNVKIQMIGETSRLPEDTLAALNAAIDKTKRNTGLILNFALNYGGRAEITSAVRFIAQDVLDAKLNPGDITEDLIANYLMTDHLPYLYRDPDLIIRTSGELRLSNFLPWQSAYSEFYFTPVLWPDFKKAELLKAIADYNRRQRRFGKV</sequence>
<reference key="1">
    <citation type="journal article" date="2004" name="J. Infect. Dis.">
        <title>Progress toward characterization of the group A Streptococcus metagenome: complete genome sequence of a macrolide-resistant serotype M6 strain.</title>
        <authorList>
            <person name="Banks D.J."/>
            <person name="Porcella S.F."/>
            <person name="Barbian K.D."/>
            <person name="Beres S.B."/>
            <person name="Philips L.E."/>
            <person name="Voyich J.M."/>
            <person name="DeLeo F.R."/>
            <person name="Martin J.M."/>
            <person name="Somerville G.A."/>
            <person name="Musser J.M."/>
        </authorList>
    </citation>
    <scope>NUCLEOTIDE SEQUENCE [LARGE SCALE GENOMIC DNA]</scope>
    <source>
        <strain>ATCC BAA-946 / MGAS10394</strain>
    </source>
</reference>